<feature type="chain" id="PRO_1000065058" description="Acetylornithine deacetylase">
    <location>
        <begin position="1"/>
        <end position="383"/>
    </location>
</feature>
<feature type="active site" evidence="1">
    <location>
        <position position="82"/>
    </location>
</feature>
<feature type="active site" evidence="1">
    <location>
        <position position="144"/>
    </location>
</feature>
<feature type="binding site" evidence="1">
    <location>
        <position position="80"/>
    </location>
    <ligand>
        <name>Zn(2+)</name>
        <dbReference type="ChEBI" id="CHEBI:29105"/>
        <label>1</label>
    </ligand>
</feature>
<feature type="binding site" evidence="1">
    <location>
        <position position="112"/>
    </location>
    <ligand>
        <name>Zn(2+)</name>
        <dbReference type="ChEBI" id="CHEBI:29105"/>
        <label>1</label>
    </ligand>
</feature>
<feature type="binding site" evidence="1">
    <location>
        <position position="112"/>
    </location>
    <ligand>
        <name>Zn(2+)</name>
        <dbReference type="ChEBI" id="CHEBI:29105"/>
        <label>2</label>
    </ligand>
</feature>
<feature type="binding site" evidence="1">
    <location>
        <position position="145"/>
    </location>
    <ligand>
        <name>Zn(2+)</name>
        <dbReference type="ChEBI" id="CHEBI:29105"/>
        <label>2</label>
    </ligand>
</feature>
<feature type="binding site" evidence="1">
    <location>
        <position position="169"/>
    </location>
    <ligand>
        <name>Zn(2+)</name>
        <dbReference type="ChEBI" id="CHEBI:29105"/>
        <label>1</label>
    </ligand>
</feature>
<feature type="binding site" evidence="1">
    <location>
        <position position="355"/>
    </location>
    <ligand>
        <name>Zn(2+)</name>
        <dbReference type="ChEBI" id="CHEBI:29105"/>
        <label>2</label>
    </ligand>
</feature>
<reference key="1">
    <citation type="journal article" date="2004" name="Proc. Natl. Acad. Sci. U.S.A.">
        <title>Genome sequence of the enterobacterial phytopathogen Erwinia carotovora subsp. atroseptica and characterization of virulence factors.</title>
        <authorList>
            <person name="Bell K.S."/>
            <person name="Sebaihia M."/>
            <person name="Pritchard L."/>
            <person name="Holden M.T.G."/>
            <person name="Hyman L.J."/>
            <person name="Holeva M.C."/>
            <person name="Thomson N.R."/>
            <person name="Bentley S.D."/>
            <person name="Churcher L.J.C."/>
            <person name="Mungall K."/>
            <person name="Atkin R."/>
            <person name="Bason N."/>
            <person name="Brooks K."/>
            <person name="Chillingworth T."/>
            <person name="Clark K."/>
            <person name="Doggett J."/>
            <person name="Fraser A."/>
            <person name="Hance Z."/>
            <person name="Hauser H."/>
            <person name="Jagels K."/>
            <person name="Moule S."/>
            <person name="Norbertczak H."/>
            <person name="Ormond D."/>
            <person name="Price C."/>
            <person name="Quail M.A."/>
            <person name="Sanders M."/>
            <person name="Walker D."/>
            <person name="Whitehead S."/>
            <person name="Salmond G.P.C."/>
            <person name="Birch P.R.J."/>
            <person name="Parkhill J."/>
            <person name="Toth I.K."/>
        </authorList>
    </citation>
    <scope>NUCLEOTIDE SEQUENCE [LARGE SCALE GENOMIC DNA]</scope>
    <source>
        <strain>SCRI 1043 / ATCC BAA-672</strain>
    </source>
</reference>
<dbReference type="EC" id="3.5.1.16" evidence="1"/>
<dbReference type="EMBL" id="BX950851">
    <property type="protein sequence ID" value="CAG73110.1"/>
    <property type="molecule type" value="Genomic_DNA"/>
</dbReference>
<dbReference type="SMR" id="Q6DAR2"/>
<dbReference type="STRING" id="218491.ECA0191"/>
<dbReference type="MEROPS" id="M20.974"/>
<dbReference type="KEGG" id="eca:ECA0191"/>
<dbReference type="eggNOG" id="COG0624">
    <property type="taxonomic scope" value="Bacteria"/>
</dbReference>
<dbReference type="HOGENOM" id="CLU_021802_2_4_6"/>
<dbReference type="OrthoDB" id="3665926at2"/>
<dbReference type="UniPathway" id="UPA00068">
    <property type="reaction ID" value="UER00110"/>
</dbReference>
<dbReference type="Proteomes" id="UP000007966">
    <property type="component" value="Chromosome"/>
</dbReference>
<dbReference type="GO" id="GO:0005737">
    <property type="term" value="C:cytoplasm"/>
    <property type="evidence" value="ECO:0007669"/>
    <property type="project" value="UniProtKB-SubCell"/>
</dbReference>
<dbReference type="GO" id="GO:0008777">
    <property type="term" value="F:acetylornithine deacetylase activity"/>
    <property type="evidence" value="ECO:0007669"/>
    <property type="project" value="UniProtKB-UniRule"/>
</dbReference>
<dbReference type="GO" id="GO:0008270">
    <property type="term" value="F:zinc ion binding"/>
    <property type="evidence" value="ECO:0007669"/>
    <property type="project" value="UniProtKB-UniRule"/>
</dbReference>
<dbReference type="GO" id="GO:0006526">
    <property type="term" value="P:L-arginine biosynthetic process"/>
    <property type="evidence" value="ECO:0007669"/>
    <property type="project" value="UniProtKB-UniRule"/>
</dbReference>
<dbReference type="CDD" id="cd03894">
    <property type="entry name" value="M20_ArgE"/>
    <property type="match status" value="1"/>
</dbReference>
<dbReference type="FunFam" id="3.30.70.360:FF:000003">
    <property type="entry name" value="Acetylornithine deacetylase"/>
    <property type="match status" value="1"/>
</dbReference>
<dbReference type="Gene3D" id="3.30.70.360">
    <property type="match status" value="1"/>
</dbReference>
<dbReference type="Gene3D" id="3.40.630.10">
    <property type="entry name" value="Zn peptidases"/>
    <property type="match status" value="1"/>
</dbReference>
<dbReference type="HAMAP" id="MF_01108">
    <property type="entry name" value="ArgE"/>
    <property type="match status" value="1"/>
</dbReference>
<dbReference type="InterPro" id="IPR010169">
    <property type="entry name" value="AcOrn-deacetyl"/>
</dbReference>
<dbReference type="InterPro" id="IPR001261">
    <property type="entry name" value="ArgE/DapE_CS"/>
</dbReference>
<dbReference type="InterPro" id="IPR036264">
    <property type="entry name" value="Bact_exopeptidase_dim_dom"/>
</dbReference>
<dbReference type="InterPro" id="IPR002933">
    <property type="entry name" value="Peptidase_M20"/>
</dbReference>
<dbReference type="InterPro" id="IPR011650">
    <property type="entry name" value="Peptidase_M20_dimer"/>
</dbReference>
<dbReference type="InterPro" id="IPR050072">
    <property type="entry name" value="Peptidase_M20A"/>
</dbReference>
<dbReference type="NCBIfam" id="TIGR01892">
    <property type="entry name" value="AcOrn-deacetyl"/>
    <property type="match status" value="1"/>
</dbReference>
<dbReference type="NCBIfam" id="NF003474">
    <property type="entry name" value="PRK05111.1"/>
    <property type="match status" value="1"/>
</dbReference>
<dbReference type="PANTHER" id="PTHR43808">
    <property type="entry name" value="ACETYLORNITHINE DEACETYLASE"/>
    <property type="match status" value="1"/>
</dbReference>
<dbReference type="PANTHER" id="PTHR43808:SF1">
    <property type="entry name" value="ACETYLORNITHINE DEACETYLASE"/>
    <property type="match status" value="1"/>
</dbReference>
<dbReference type="Pfam" id="PF07687">
    <property type="entry name" value="M20_dimer"/>
    <property type="match status" value="1"/>
</dbReference>
<dbReference type="Pfam" id="PF01546">
    <property type="entry name" value="Peptidase_M20"/>
    <property type="match status" value="1"/>
</dbReference>
<dbReference type="SUPFAM" id="SSF55031">
    <property type="entry name" value="Bacterial exopeptidase dimerisation domain"/>
    <property type="match status" value="1"/>
</dbReference>
<dbReference type="SUPFAM" id="SSF53187">
    <property type="entry name" value="Zn-dependent exopeptidases"/>
    <property type="match status" value="1"/>
</dbReference>
<dbReference type="PROSITE" id="PS00758">
    <property type="entry name" value="ARGE_DAPE_CPG2_1"/>
    <property type="match status" value="1"/>
</dbReference>
<dbReference type="PROSITE" id="PS00759">
    <property type="entry name" value="ARGE_DAPE_CPG2_2"/>
    <property type="match status" value="1"/>
</dbReference>
<gene>
    <name evidence="1" type="primary">argE</name>
    <name type="ordered locus">ECA0191</name>
</gene>
<comment type="function">
    <text evidence="1">Catalyzes the hydrolysis of the amide bond of N(2)-acetylated L-amino acids. Cleaves the acetyl group from N-acetyl-L-ornithine to form L-ornithine, an intermediate in L-arginine biosynthesis pathway, and a branchpoint in the synthesis of polyamines.</text>
</comment>
<comment type="catalytic activity">
    <reaction evidence="1">
        <text>N(2)-acetyl-L-ornithine + H2O = L-ornithine + acetate</text>
        <dbReference type="Rhea" id="RHEA:15941"/>
        <dbReference type="ChEBI" id="CHEBI:15377"/>
        <dbReference type="ChEBI" id="CHEBI:30089"/>
        <dbReference type="ChEBI" id="CHEBI:46911"/>
        <dbReference type="ChEBI" id="CHEBI:57805"/>
        <dbReference type="EC" id="3.5.1.16"/>
    </reaction>
</comment>
<comment type="cofactor">
    <cofactor evidence="1">
        <name>Zn(2+)</name>
        <dbReference type="ChEBI" id="CHEBI:29105"/>
    </cofactor>
    <cofactor evidence="1">
        <name>Co(2+)</name>
        <dbReference type="ChEBI" id="CHEBI:48828"/>
    </cofactor>
    <text evidence="1">Binds 2 Zn(2+) or Co(2+) ions per subunit.</text>
</comment>
<comment type="cofactor">
    <cofactor evidence="1">
        <name>glutathione</name>
        <dbReference type="ChEBI" id="CHEBI:57925"/>
    </cofactor>
</comment>
<comment type="pathway">
    <text evidence="1">Amino-acid biosynthesis; L-arginine biosynthesis; L-ornithine from N(2)-acetyl-L-ornithine (linear): step 1/1.</text>
</comment>
<comment type="subunit">
    <text evidence="1">Homodimer.</text>
</comment>
<comment type="subcellular location">
    <subcellularLocation>
        <location evidence="1">Cytoplasm</location>
    </subcellularLocation>
</comment>
<comment type="similarity">
    <text evidence="1">Belongs to the peptidase M20A family. ArgE subfamily.</text>
</comment>
<evidence type="ECO:0000255" key="1">
    <source>
        <dbReference type="HAMAP-Rule" id="MF_01108"/>
    </source>
</evidence>
<keyword id="KW-0028">Amino-acid biosynthesis</keyword>
<keyword id="KW-0055">Arginine biosynthesis</keyword>
<keyword id="KW-0170">Cobalt</keyword>
<keyword id="KW-0963">Cytoplasm</keyword>
<keyword id="KW-0378">Hydrolase</keyword>
<keyword id="KW-0479">Metal-binding</keyword>
<keyword id="KW-1185">Reference proteome</keyword>
<keyword id="KW-0862">Zinc</keyword>
<sequence>MKMNLPPFIELYRALIATPSISATDSALDQSNHTLINLLAGWFGDIGFHVEVQPVPGTLNKFNMLARIGEGKGGLLLAGHTDTVPFDDGRWTRDPFTLTEHDNKLYGLGTADMKGFFAFILDALRDIDPTKLTKPLYVLATADEETTMAGAKYFSESTQIRPDCAIIGEPTSLQPVRAHKGHMSNAIRIQGQSGHSSDPSRGVNAIELMHEAISHLLVLRNTLQERYHNPIFHIPYPTMNLGHIHGGDAANRICGCCELHMDIRPLPGITLNDLDGLLSEALAPVSQRWPGRLTISELHPPIPGYECPPDHRLISVVENLLGTKTEIVNYCTEAPFIQTLCPTLVLGPGSIEQAHQPDEYIDTAFIKPTRELISQVIHHFCHH</sequence>
<name>ARGE_PECAS</name>
<protein>
    <recommendedName>
        <fullName evidence="1">Acetylornithine deacetylase</fullName>
        <shortName evidence="1">AO</shortName>
        <shortName evidence="1">Acetylornithinase</shortName>
        <ecNumber evidence="1">3.5.1.16</ecNumber>
    </recommendedName>
    <alternativeName>
        <fullName evidence="1">N-acetylornithinase</fullName>
        <shortName evidence="1">NAO</shortName>
    </alternativeName>
</protein>
<proteinExistence type="inferred from homology"/>
<organism>
    <name type="scientific">Pectobacterium atrosepticum (strain SCRI 1043 / ATCC BAA-672)</name>
    <name type="common">Erwinia carotovora subsp. atroseptica</name>
    <dbReference type="NCBI Taxonomy" id="218491"/>
    <lineage>
        <taxon>Bacteria</taxon>
        <taxon>Pseudomonadati</taxon>
        <taxon>Pseudomonadota</taxon>
        <taxon>Gammaproteobacteria</taxon>
        <taxon>Enterobacterales</taxon>
        <taxon>Pectobacteriaceae</taxon>
        <taxon>Pectobacterium</taxon>
    </lineage>
</organism>
<accession>Q6DAR2</accession>